<reference key="1">
    <citation type="journal article" date="2005" name="J. Bacteriol.">
        <title>Genomic sequence of an otitis media isolate of nontypeable Haemophilus influenzae: comparative study with H. influenzae serotype d, strain KW20.</title>
        <authorList>
            <person name="Harrison A."/>
            <person name="Dyer D.W."/>
            <person name="Gillaspy A."/>
            <person name="Ray W.C."/>
            <person name="Mungur R."/>
            <person name="Carson M.B."/>
            <person name="Zhong H."/>
            <person name="Gipson J."/>
            <person name="Gipson M."/>
            <person name="Johnson L.S."/>
            <person name="Lewis L."/>
            <person name="Bakaletz L.O."/>
            <person name="Munson R.S. Jr."/>
        </authorList>
    </citation>
    <scope>NUCLEOTIDE SEQUENCE [LARGE SCALE GENOMIC DNA]</scope>
    <source>
        <strain>86-028NP</strain>
    </source>
</reference>
<proteinExistence type="inferred from homology"/>
<dbReference type="EC" id="7.-.-.-" evidence="1"/>
<dbReference type="EMBL" id="CP000057">
    <property type="protein sequence ID" value="AAX88743.1"/>
    <property type="molecule type" value="Genomic_DNA"/>
</dbReference>
<dbReference type="SMR" id="Q4QJQ4"/>
<dbReference type="KEGG" id="hit:NTHI1994"/>
<dbReference type="HOGENOM" id="CLU_077882_1_0_6"/>
<dbReference type="Proteomes" id="UP000002525">
    <property type="component" value="Chromosome"/>
</dbReference>
<dbReference type="GO" id="GO:0005886">
    <property type="term" value="C:plasma membrane"/>
    <property type="evidence" value="ECO:0007669"/>
    <property type="project" value="UniProtKB-SubCell"/>
</dbReference>
<dbReference type="GO" id="GO:0009055">
    <property type="term" value="F:electron transfer activity"/>
    <property type="evidence" value="ECO:0007669"/>
    <property type="project" value="InterPro"/>
</dbReference>
<dbReference type="GO" id="GO:0010181">
    <property type="term" value="F:FMN binding"/>
    <property type="evidence" value="ECO:0007669"/>
    <property type="project" value="InterPro"/>
</dbReference>
<dbReference type="GO" id="GO:0022900">
    <property type="term" value="P:electron transport chain"/>
    <property type="evidence" value="ECO:0007669"/>
    <property type="project" value="UniProtKB-UniRule"/>
</dbReference>
<dbReference type="HAMAP" id="MF_00479">
    <property type="entry name" value="RsxG_RnfG"/>
    <property type="match status" value="1"/>
</dbReference>
<dbReference type="InterPro" id="IPR007329">
    <property type="entry name" value="FMN-bd"/>
</dbReference>
<dbReference type="InterPro" id="IPR010209">
    <property type="entry name" value="Ion_transpt_RnfG/RsxG"/>
</dbReference>
<dbReference type="NCBIfam" id="NF002519">
    <property type="entry name" value="PRK01908.1"/>
    <property type="match status" value="1"/>
</dbReference>
<dbReference type="NCBIfam" id="TIGR01947">
    <property type="entry name" value="rnfG"/>
    <property type="match status" value="1"/>
</dbReference>
<dbReference type="PANTHER" id="PTHR36118">
    <property type="entry name" value="ION-TRANSLOCATING OXIDOREDUCTASE COMPLEX SUBUNIT G"/>
    <property type="match status" value="1"/>
</dbReference>
<dbReference type="PANTHER" id="PTHR36118:SF1">
    <property type="entry name" value="ION-TRANSLOCATING OXIDOREDUCTASE COMPLEX SUBUNIT G"/>
    <property type="match status" value="1"/>
</dbReference>
<dbReference type="Pfam" id="PF04205">
    <property type="entry name" value="FMN_bind"/>
    <property type="match status" value="1"/>
</dbReference>
<dbReference type="PIRSF" id="PIRSF006091">
    <property type="entry name" value="E_trnsport_RnfG"/>
    <property type="match status" value="1"/>
</dbReference>
<dbReference type="SMART" id="SM00900">
    <property type="entry name" value="FMN_bind"/>
    <property type="match status" value="1"/>
</dbReference>
<evidence type="ECO:0000255" key="1">
    <source>
        <dbReference type="HAMAP-Rule" id="MF_00479"/>
    </source>
</evidence>
<organism>
    <name type="scientific">Haemophilus influenzae (strain 86-028NP)</name>
    <dbReference type="NCBI Taxonomy" id="281310"/>
    <lineage>
        <taxon>Bacteria</taxon>
        <taxon>Pseudomonadati</taxon>
        <taxon>Pseudomonadota</taxon>
        <taxon>Gammaproteobacteria</taxon>
        <taxon>Pasteurellales</taxon>
        <taxon>Pasteurellaceae</taxon>
        <taxon>Haemophilus</taxon>
    </lineage>
</organism>
<protein>
    <recommendedName>
        <fullName evidence="1">Ion-translocating oxidoreductase complex subunit G</fullName>
        <ecNumber evidence="1">7.-.-.-</ecNumber>
    </recommendedName>
    <alternativeName>
        <fullName evidence="1">Rnf electron transport complex subunit G</fullName>
    </alternativeName>
</protein>
<sequence length="207" mass="22952">MGTVKITSRYGILLGFIALLCTIISTGIFFLTKDKIDAVIAAQQRELLLQVIPQDYFNNNLLESAVIPQDKNFVGIQKIYFAKKDGNISAYAYETTAPDGYSGDIRLLVGLDPKGEVLGVRVIEHHETPGLGDKIERRISNWILGFTNQSINEHNLSEWAVKKDGGKFDQFSGATITPRAVVNQTKRSALIMLNNQALLQQLSTQVK</sequence>
<feature type="chain" id="PRO_1000014120" description="Ion-translocating oxidoreductase complex subunit G">
    <location>
        <begin position="1"/>
        <end position="207"/>
    </location>
</feature>
<feature type="transmembrane region" description="Helical" evidence="1">
    <location>
        <begin position="11"/>
        <end position="31"/>
    </location>
</feature>
<feature type="modified residue" description="FMN phosphoryl threonine" evidence="1">
    <location>
        <position position="175"/>
    </location>
</feature>
<name>RNFG_HAEI8</name>
<accession>Q4QJQ4</accession>
<gene>
    <name evidence="1" type="primary">rnfG</name>
    <name type="ordered locus">NTHI1994</name>
</gene>
<comment type="function">
    <text evidence="1">Part of a membrane-bound complex that couples electron transfer with translocation of ions across the membrane.</text>
</comment>
<comment type="cofactor">
    <cofactor evidence="1">
        <name>FMN</name>
        <dbReference type="ChEBI" id="CHEBI:58210"/>
    </cofactor>
</comment>
<comment type="subunit">
    <text evidence="1">The complex is composed of six subunits: RnfA, RnfB, RnfC, RnfD, RnfE and RnfG.</text>
</comment>
<comment type="subcellular location">
    <subcellularLocation>
        <location evidence="1">Cell inner membrane</location>
        <topology evidence="1">Single-pass membrane protein</topology>
    </subcellularLocation>
</comment>
<comment type="similarity">
    <text evidence="1">Belongs to the RnfG family.</text>
</comment>
<keyword id="KW-0997">Cell inner membrane</keyword>
<keyword id="KW-1003">Cell membrane</keyword>
<keyword id="KW-0249">Electron transport</keyword>
<keyword id="KW-0285">Flavoprotein</keyword>
<keyword id="KW-0288">FMN</keyword>
<keyword id="KW-0472">Membrane</keyword>
<keyword id="KW-0597">Phosphoprotein</keyword>
<keyword id="KW-1278">Translocase</keyword>
<keyword id="KW-0812">Transmembrane</keyword>
<keyword id="KW-1133">Transmembrane helix</keyword>
<keyword id="KW-0813">Transport</keyword>